<name>RS21_SALSV</name>
<accession>B4TVU3</accession>
<organism>
    <name type="scientific">Salmonella schwarzengrund (strain CVM19633)</name>
    <dbReference type="NCBI Taxonomy" id="439843"/>
    <lineage>
        <taxon>Bacteria</taxon>
        <taxon>Pseudomonadati</taxon>
        <taxon>Pseudomonadota</taxon>
        <taxon>Gammaproteobacteria</taxon>
        <taxon>Enterobacterales</taxon>
        <taxon>Enterobacteriaceae</taxon>
        <taxon>Salmonella</taxon>
    </lineage>
</organism>
<gene>
    <name evidence="1" type="primary">rpsU</name>
    <name type="ordered locus">SeSA_A3399</name>
</gene>
<proteinExistence type="inferred from homology"/>
<evidence type="ECO:0000255" key="1">
    <source>
        <dbReference type="HAMAP-Rule" id="MF_00358"/>
    </source>
</evidence>
<evidence type="ECO:0000256" key="2">
    <source>
        <dbReference type="SAM" id="MobiDB-lite"/>
    </source>
</evidence>
<evidence type="ECO:0000305" key="3"/>
<sequence length="71" mass="8500">MPVIKVRENEPFDVALRRFKRSCEKAGVLAEVRRREFYEKPTTERKRAKASAVKRHAKKLARENARRTRLY</sequence>
<comment type="similarity">
    <text evidence="1">Belongs to the bacterial ribosomal protein bS21 family.</text>
</comment>
<feature type="chain" id="PRO_1000120661" description="Small ribosomal subunit protein bS21">
    <location>
        <begin position="1"/>
        <end position="71"/>
    </location>
</feature>
<feature type="region of interest" description="Disordered" evidence="2">
    <location>
        <begin position="43"/>
        <end position="71"/>
    </location>
</feature>
<feature type="compositionally biased region" description="Basic residues" evidence="2">
    <location>
        <begin position="46"/>
        <end position="59"/>
    </location>
</feature>
<feature type="compositionally biased region" description="Basic and acidic residues" evidence="2">
    <location>
        <begin position="60"/>
        <end position="71"/>
    </location>
</feature>
<protein>
    <recommendedName>
        <fullName evidence="1">Small ribosomal subunit protein bS21</fullName>
    </recommendedName>
    <alternativeName>
        <fullName evidence="3">30S ribosomal protein S21</fullName>
    </alternativeName>
</protein>
<keyword id="KW-0687">Ribonucleoprotein</keyword>
<keyword id="KW-0689">Ribosomal protein</keyword>
<dbReference type="EMBL" id="CP001127">
    <property type="protein sequence ID" value="ACF90190.1"/>
    <property type="molecule type" value="Genomic_DNA"/>
</dbReference>
<dbReference type="RefSeq" id="WP_001144069.1">
    <property type="nucleotide sequence ID" value="NC_011094.1"/>
</dbReference>
<dbReference type="SMR" id="B4TVU3"/>
<dbReference type="GeneID" id="98390195"/>
<dbReference type="KEGG" id="sew:SeSA_A3399"/>
<dbReference type="HOGENOM" id="CLU_159258_1_0_6"/>
<dbReference type="Proteomes" id="UP000001865">
    <property type="component" value="Chromosome"/>
</dbReference>
<dbReference type="GO" id="GO:1990904">
    <property type="term" value="C:ribonucleoprotein complex"/>
    <property type="evidence" value="ECO:0007669"/>
    <property type="project" value="UniProtKB-KW"/>
</dbReference>
<dbReference type="GO" id="GO:0005840">
    <property type="term" value="C:ribosome"/>
    <property type="evidence" value="ECO:0007669"/>
    <property type="project" value="UniProtKB-KW"/>
</dbReference>
<dbReference type="GO" id="GO:0003735">
    <property type="term" value="F:structural constituent of ribosome"/>
    <property type="evidence" value="ECO:0007669"/>
    <property type="project" value="InterPro"/>
</dbReference>
<dbReference type="GO" id="GO:0006412">
    <property type="term" value="P:translation"/>
    <property type="evidence" value="ECO:0007669"/>
    <property type="project" value="UniProtKB-UniRule"/>
</dbReference>
<dbReference type="FunFam" id="1.20.5.1150:FF:000001">
    <property type="entry name" value="30S ribosomal protein S21"/>
    <property type="match status" value="1"/>
</dbReference>
<dbReference type="Gene3D" id="1.20.5.1150">
    <property type="entry name" value="Ribosomal protein S8"/>
    <property type="match status" value="1"/>
</dbReference>
<dbReference type="HAMAP" id="MF_00358">
    <property type="entry name" value="Ribosomal_bS21"/>
    <property type="match status" value="1"/>
</dbReference>
<dbReference type="InterPro" id="IPR001911">
    <property type="entry name" value="Ribosomal_bS21"/>
</dbReference>
<dbReference type="InterPro" id="IPR018278">
    <property type="entry name" value="Ribosomal_bS21_CS"/>
</dbReference>
<dbReference type="InterPro" id="IPR038380">
    <property type="entry name" value="Ribosomal_bS21_sf"/>
</dbReference>
<dbReference type="NCBIfam" id="TIGR00030">
    <property type="entry name" value="S21p"/>
    <property type="match status" value="1"/>
</dbReference>
<dbReference type="PANTHER" id="PTHR21109">
    <property type="entry name" value="MITOCHONDRIAL 28S RIBOSOMAL PROTEIN S21"/>
    <property type="match status" value="1"/>
</dbReference>
<dbReference type="PANTHER" id="PTHR21109:SF22">
    <property type="entry name" value="SMALL RIBOSOMAL SUBUNIT PROTEIN BS21"/>
    <property type="match status" value="1"/>
</dbReference>
<dbReference type="Pfam" id="PF01165">
    <property type="entry name" value="Ribosomal_S21"/>
    <property type="match status" value="1"/>
</dbReference>
<dbReference type="PRINTS" id="PR00976">
    <property type="entry name" value="RIBOSOMALS21"/>
</dbReference>
<dbReference type="PROSITE" id="PS01181">
    <property type="entry name" value="RIBOSOMAL_S21"/>
    <property type="match status" value="1"/>
</dbReference>
<reference key="1">
    <citation type="journal article" date="2011" name="J. Bacteriol.">
        <title>Comparative genomics of 28 Salmonella enterica isolates: evidence for CRISPR-mediated adaptive sublineage evolution.</title>
        <authorList>
            <person name="Fricke W.F."/>
            <person name="Mammel M.K."/>
            <person name="McDermott P.F."/>
            <person name="Tartera C."/>
            <person name="White D.G."/>
            <person name="Leclerc J.E."/>
            <person name="Ravel J."/>
            <person name="Cebula T.A."/>
        </authorList>
    </citation>
    <scope>NUCLEOTIDE SEQUENCE [LARGE SCALE GENOMIC DNA]</scope>
    <source>
        <strain>CVM19633</strain>
    </source>
</reference>